<organism>
    <name type="scientific">Bos taurus</name>
    <name type="common">Bovine</name>
    <dbReference type="NCBI Taxonomy" id="9913"/>
    <lineage>
        <taxon>Eukaryota</taxon>
        <taxon>Metazoa</taxon>
        <taxon>Chordata</taxon>
        <taxon>Craniata</taxon>
        <taxon>Vertebrata</taxon>
        <taxon>Euteleostomi</taxon>
        <taxon>Mammalia</taxon>
        <taxon>Eutheria</taxon>
        <taxon>Laurasiatheria</taxon>
        <taxon>Artiodactyla</taxon>
        <taxon>Ruminantia</taxon>
        <taxon>Pecora</taxon>
        <taxon>Bovidae</taxon>
        <taxon>Bovinae</taxon>
        <taxon>Bos</taxon>
    </lineage>
</organism>
<accession>O62644</accession>
<accession>Q3ZBQ8</accession>
<protein>
    <recommendedName>
        <fullName>Leukocyte cell-derived chemotaxin-2</fullName>
        <shortName>LECT-2</shortName>
        <shortName>bLECT2</shortName>
    </recommendedName>
    <alternativeName>
        <fullName>Chondromodulin II</fullName>
        <shortName>ChM-II</shortName>
        <shortName>bChM-II</shortName>
    </alternativeName>
</protein>
<name>LECT2_BOVIN</name>
<dbReference type="EMBL" id="AB001350">
    <property type="protein sequence ID" value="BAA25302.1"/>
    <property type="molecule type" value="mRNA"/>
</dbReference>
<dbReference type="EMBL" id="D89011">
    <property type="protein sequence ID" value="BAB18616.1"/>
    <property type="molecule type" value="mRNA"/>
</dbReference>
<dbReference type="EMBL" id="BC103166">
    <property type="protein sequence ID" value="AAI03167.1"/>
    <property type="molecule type" value="mRNA"/>
</dbReference>
<dbReference type="PIR" id="JH0270">
    <property type="entry name" value="JH0270"/>
</dbReference>
<dbReference type="RefSeq" id="NP_776805.1">
    <property type="nucleotide sequence ID" value="NM_174380.2"/>
</dbReference>
<dbReference type="SMR" id="O62644"/>
<dbReference type="FunCoup" id="O62644">
    <property type="interactions" value="143"/>
</dbReference>
<dbReference type="STRING" id="9913.ENSBTAP00000001648"/>
<dbReference type="PaxDb" id="9913-ENSBTAP00000001648"/>
<dbReference type="Ensembl" id="ENSBTAT00000001648.5">
    <property type="protein sequence ID" value="ENSBTAP00000001648.3"/>
    <property type="gene ID" value="ENSBTAG00000001247.5"/>
</dbReference>
<dbReference type="GeneID" id="281899"/>
<dbReference type="KEGG" id="bta:281899"/>
<dbReference type="CTD" id="3950"/>
<dbReference type="VEuPathDB" id="HostDB:ENSBTAG00000001247"/>
<dbReference type="VGNC" id="VGNC:30832">
    <property type="gene designation" value="LECT2"/>
</dbReference>
<dbReference type="eggNOG" id="ENOG502S16D">
    <property type="taxonomic scope" value="Eukaryota"/>
</dbReference>
<dbReference type="GeneTree" id="ENSGT00390000015484"/>
<dbReference type="HOGENOM" id="CLU_144880_0_0_1"/>
<dbReference type="InParanoid" id="O62644"/>
<dbReference type="OMA" id="MCDSHGC"/>
<dbReference type="OrthoDB" id="5911921at2759"/>
<dbReference type="TreeFam" id="TF331097"/>
<dbReference type="Proteomes" id="UP000009136">
    <property type="component" value="Chromosome 7"/>
</dbReference>
<dbReference type="Bgee" id="ENSBTAG00000001247">
    <property type="expression patterns" value="Expressed in liver and 30 other cell types or tissues"/>
</dbReference>
<dbReference type="GO" id="GO:0005576">
    <property type="term" value="C:extracellular region"/>
    <property type="evidence" value="ECO:0007669"/>
    <property type="project" value="UniProtKB-SubCell"/>
</dbReference>
<dbReference type="GO" id="GO:0042802">
    <property type="term" value="F:identical protein binding"/>
    <property type="evidence" value="ECO:0007669"/>
    <property type="project" value="Ensembl"/>
</dbReference>
<dbReference type="GO" id="GO:0046872">
    <property type="term" value="F:metal ion binding"/>
    <property type="evidence" value="ECO:0007669"/>
    <property type="project" value="UniProtKB-KW"/>
</dbReference>
<dbReference type="GO" id="GO:0006935">
    <property type="term" value="P:chemotaxis"/>
    <property type="evidence" value="ECO:0007669"/>
    <property type="project" value="UniProtKB-KW"/>
</dbReference>
<dbReference type="FunFam" id="2.70.70.10:FF:000011">
    <property type="entry name" value="Leukocyte cell-derived chemotaxin-2"/>
    <property type="match status" value="1"/>
</dbReference>
<dbReference type="Gene3D" id="2.70.70.10">
    <property type="entry name" value="Glucose Permease (Domain IIA)"/>
    <property type="match status" value="1"/>
</dbReference>
<dbReference type="InterPro" id="IPR011055">
    <property type="entry name" value="Dup_hybrid_motif"/>
</dbReference>
<dbReference type="InterPro" id="IPR008663">
    <property type="entry name" value="LECT2"/>
</dbReference>
<dbReference type="InterPro" id="IPR017381">
    <property type="entry name" value="LECT2_chordata"/>
</dbReference>
<dbReference type="InterPro" id="IPR016047">
    <property type="entry name" value="Peptidase_M23"/>
</dbReference>
<dbReference type="PANTHER" id="PTHR11329">
    <property type="entry name" value="LEUKOCYTE CELL-DERIVED CHEMOTAXIN 2"/>
    <property type="match status" value="1"/>
</dbReference>
<dbReference type="PANTHER" id="PTHR11329:SF0">
    <property type="entry name" value="LEUKOCYTE CELL-DERIVED CHEMOTAXIN-2"/>
    <property type="match status" value="1"/>
</dbReference>
<dbReference type="Pfam" id="PF01551">
    <property type="entry name" value="Peptidase_M23"/>
    <property type="match status" value="1"/>
</dbReference>
<dbReference type="PIRSF" id="PIRSF038085">
    <property type="entry name" value="LECT3"/>
    <property type="match status" value="1"/>
</dbReference>
<reference key="1">
    <citation type="journal article" date="1998" name="Biochim. Biophys. Acta">
        <title>Molecular cloning of human and bovine LECT2 having a neutrophil chemotactic activity and its specific expression in the liver.</title>
        <authorList>
            <person name="Yamagoe S."/>
            <person name="Mizuno S."/>
            <person name="Suzuki K."/>
        </authorList>
    </citation>
    <scope>NUCLEOTIDE SEQUENCE [MRNA]</scope>
    <scope>FUNCTION</scope>
    <source>
        <tissue>Liver</tissue>
    </source>
</reference>
<reference key="2">
    <citation type="journal article" date="1999" name="J. Biochem.">
        <title>Molecular cloning of mouse and bovine chondromodulin-II cDNAs and the growth-promoting actions of bovine recombinant protein.</title>
        <authorList>
            <person name="Shukunami C."/>
            <person name="Kondo J."/>
            <person name="Wakai H."/>
            <person name="Takahashi K."/>
            <person name="Inoue H."/>
            <person name="Kamizono A."/>
            <person name="Hiraki Y."/>
        </authorList>
    </citation>
    <scope>NUCLEOTIDE SEQUENCE [MRNA]</scope>
    <scope>FUNCTION</scope>
    <source>
        <tissue>Embryo</tissue>
    </source>
</reference>
<reference key="3">
    <citation type="submission" date="2005-08" db="EMBL/GenBank/DDBJ databases">
        <authorList>
            <consortium name="NIH - Mammalian Gene Collection (MGC) project"/>
        </authorList>
    </citation>
    <scope>NUCLEOTIDE SEQUENCE [LARGE SCALE MRNA]</scope>
    <source>
        <strain>Hereford</strain>
        <tissue>Fetal liver</tissue>
    </source>
</reference>
<reference key="4">
    <citation type="journal article" date="1996" name="J. Biol. Chem.">
        <title>A novel growth-promoting factor derived from fetal bovine cartilage, chondromodulin II. Purification and amino acid sequence.</title>
        <authorList>
            <person name="Hiraki Y."/>
            <person name="Inoue H."/>
            <person name="Kondo J."/>
            <person name="Kamizono A."/>
            <person name="Yoshitake Y."/>
            <person name="Shukunami C."/>
            <person name="Suzuki F."/>
        </authorList>
    </citation>
    <scope>PROTEIN SEQUENCE OF 19-151</scope>
    <source>
        <tissue>Epiphyseal cartilage</tissue>
    </source>
</reference>
<sequence>MFSTGTLLLAALISPALAGPWAIICAGKSSNEIRTCDGHGCGQYTAQRNQKLHQGVDVLCSDGSTVYAPFTGKIMGQEKPYKNKNAINNGVRISGGGFCIKMFYIKPIKYKGSIKKGEKLGTLLPLQKVYPGIQSHIHIENCDLSDPTVYL</sequence>
<gene>
    <name type="primary">LECT2</name>
</gene>
<feature type="signal peptide" evidence="3">
    <location>
        <begin position="1"/>
        <end position="18"/>
    </location>
</feature>
<feature type="chain" id="PRO_0000017363" description="Leukocyte cell-derived chemotaxin-2">
    <location>
        <begin position="19"/>
        <end position="151"/>
    </location>
</feature>
<feature type="binding site" evidence="1">
    <location>
        <position position="53"/>
    </location>
    <ligand>
        <name>Zn(2+)</name>
        <dbReference type="ChEBI" id="CHEBI:29105"/>
    </ligand>
</feature>
<feature type="binding site" evidence="1">
    <location>
        <position position="57"/>
    </location>
    <ligand>
        <name>Zn(2+)</name>
        <dbReference type="ChEBI" id="CHEBI:29105"/>
    </ligand>
</feature>
<feature type="binding site" evidence="1">
    <location>
        <position position="138"/>
    </location>
    <ligand>
        <name>Zn(2+)</name>
        <dbReference type="ChEBI" id="CHEBI:29105"/>
    </ligand>
</feature>
<feature type="disulfide bond" evidence="1">
    <location>
        <begin position="25"/>
        <end position="60"/>
    </location>
</feature>
<feature type="disulfide bond" evidence="1">
    <location>
        <begin position="36"/>
        <end position="41"/>
    </location>
</feature>
<feature type="disulfide bond" evidence="1">
    <location>
        <begin position="99"/>
        <end position="142"/>
    </location>
</feature>
<keyword id="KW-0145">Chemotaxis</keyword>
<keyword id="KW-0903">Direct protein sequencing</keyword>
<keyword id="KW-1015">Disulfide bond</keyword>
<keyword id="KW-0479">Metal-binding</keyword>
<keyword id="KW-1185">Reference proteome</keyword>
<keyword id="KW-0964">Secreted</keyword>
<keyword id="KW-0732">Signal</keyword>
<keyword id="KW-0862">Zinc</keyword>
<evidence type="ECO:0000250" key="1">
    <source>
        <dbReference type="UniProtKB" id="O14960"/>
    </source>
</evidence>
<evidence type="ECO:0000269" key="2">
    <source>
    </source>
</evidence>
<evidence type="ECO:0000269" key="3">
    <source>
    </source>
</evidence>
<evidence type="ECO:0000269" key="4">
    <source>
    </source>
</evidence>
<evidence type="ECO:0000305" key="5"/>
<proteinExistence type="evidence at protein level"/>
<comment type="function">
    <text evidence="2 3 4">Has a neutrophil chemotactic activity (PubMed:9524238). Also a positive regulator of chondrocyte proliferation (PubMed:10050029, PubMed:8798437).</text>
</comment>
<comment type="subcellular location">
    <subcellularLocation>
        <location evidence="1">Secreted</location>
    </subcellularLocation>
</comment>
<comment type="similarity">
    <text evidence="5">Belongs to the LECT2/MIM-1 family.</text>
</comment>